<organism>
    <name type="scientific">Cytophaga hutchinsonii (strain ATCC 33406 / DSM 1761 / CIP 103989 / NBRC 15051 / NCIMB 9469 / D465)</name>
    <dbReference type="NCBI Taxonomy" id="269798"/>
    <lineage>
        <taxon>Bacteria</taxon>
        <taxon>Pseudomonadati</taxon>
        <taxon>Bacteroidota</taxon>
        <taxon>Cytophagia</taxon>
        <taxon>Cytophagales</taxon>
        <taxon>Cytophagaceae</taxon>
        <taxon>Cytophaga</taxon>
    </lineage>
</organism>
<gene>
    <name evidence="1" type="primary">tsaD</name>
    <name type="synonym">gcp</name>
    <name type="ordered locus">CHU_1957</name>
</gene>
<dbReference type="EC" id="2.3.1.234" evidence="1"/>
<dbReference type="EMBL" id="CP000383">
    <property type="protein sequence ID" value="ABG59223.1"/>
    <property type="molecule type" value="Genomic_DNA"/>
</dbReference>
<dbReference type="SMR" id="Q11TP2"/>
<dbReference type="STRING" id="269798.CHU_1957"/>
<dbReference type="KEGG" id="chu:CHU_1957"/>
<dbReference type="eggNOG" id="COG0533">
    <property type="taxonomic scope" value="Bacteria"/>
</dbReference>
<dbReference type="HOGENOM" id="CLU_023208_0_2_10"/>
<dbReference type="Proteomes" id="UP000001822">
    <property type="component" value="Chromosome"/>
</dbReference>
<dbReference type="GO" id="GO:0005737">
    <property type="term" value="C:cytoplasm"/>
    <property type="evidence" value="ECO:0007669"/>
    <property type="project" value="UniProtKB-SubCell"/>
</dbReference>
<dbReference type="GO" id="GO:0005506">
    <property type="term" value="F:iron ion binding"/>
    <property type="evidence" value="ECO:0007669"/>
    <property type="project" value="UniProtKB-UniRule"/>
</dbReference>
<dbReference type="GO" id="GO:0061711">
    <property type="term" value="F:N(6)-L-threonylcarbamoyladenine synthase activity"/>
    <property type="evidence" value="ECO:0007669"/>
    <property type="project" value="UniProtKB-EC"/>
</dbReference>
<dbReference type="GO" id="GO:0002949">
    <property type="term" value="P:tRNA threonylcarbamoyladenosine modification"/>
    <property type="evidence" value="ECO:0007669"/>
    <property type="project" value="UniProtKB-UniRule"/>
</dbReference>
<dbReference type="CDD" id="cd24133">
    <property type="entry name" value="ASKHA_NBD_TsaD_bac"/>
    <property type="match status" value="1"/>
</dbReference>
<dbReference type="FunFam" id="3.30.420.40:FF:000040">
    <property type="entry name" value="tRNA N6-adenosine threonylcarbamoyltransferase"/>
    <property type="match status" value="1"/>
</dbReference>
<dbReference type="Gene3D" id="3.30.420.40">
    <property type="match status" value="2"/>
</dbReference>
<dbReference type="HAMAP" id="MF_01445">
    <property type="entry name" value="TsaD"/>
    <property type="match status" value="1"/>
</dbReference>
<dbReference type="InterPro" id="IPR043129">
    <property type="entry name" value="ATPase_NBD"/>
</dbReference>
<dbReference type="InterPro" id="IPR000905">
    <property type="entry name" value="Gcp-like_dom"/>
</dbReference>
<dbReference type="InterPro" id="IPR017861">
    <property type="entry name" value="KAE1/TsaD"/>
</dbReference>
<dbReference type="InterPro" id="IPR017860">
    <property type="entry name" value="Peptidase_M22_CS"/>
</dbReference>
<dbReference type="InterPro" id="IPR022450">
    <property type="entry name" value="TsaD"/>
</dbReference>
<dbReference type="NCBIfam" id="TIGR00329">
    <property type="entry name" value="gcp_kae1"/>
    <property type="match status" value="1"/>
</dbReference>
<dbReference type="NCBIfam" id="TIGR03723">
    <property type="entry name" value="T6A_TsaD_YgjD"/>
    <property type="match status" value="1"/>
</dbReference>
<dbReference type="PANTHER" id="PTHR11735">
    <property type="entry name" value="TRNA N6-ADENOSINE THREONYLCARBAMOYLTRANSFERASE"/>
    <property type="match status" value="1"/>
</dbReference>
<dbReference type="PANTHER" id="PTHR11735:SF6">
    <property type="entry name" value="TRNA N6-ADENOSINE THREONYLCARBAMOYLTRANSFERASE, MITOCHONDRIAL"/>
    <property type="match status" value="1"/>
</dbReference>
<dbReference type="Pfam" id="PF00814">
    <property type="entry name" value="TsaD"/>
    <property type="match status" value="1"/>
</dbReference>
<dbReference type="PRINTS" id="PR00789">
    <property type="entry name" value="OSIALOPTASE"/>
</dbReference>
<dbReference type="SUPFAM" id="SSF53067">
    <property type="entry name" value="Actin-like ATPase domain"/>
    <property type="match status" value="1"/>
</dbReference>
<dbReference type="PROSITE" id="PS01016">
    <property type="entry name" value="GLYCOPROTEASE"/>
    <property type="match status" value="1"/>
</dbReference>
<evidence type="ECO:0000255" key="1">
    <source>
        <dbReference type="HAMAP-Rule" id="MF_01445"/>
    </source>
</evidence>
<reference key="1">
    <citation type="journal article" date="2007" name="Appl. Environ. Microbiol.">
        <title>Genome sequence of the cellulolytic gliding bacterium Cytophaga hutchinsonii.</title>
        <authorList>
            <person name="Xie G."/>
            <person name="Bruce D.C."/>
            <person name="Challacombe J.F."/>
            <person name="Chertkov O."/>
            <person name="Detter J.C."/>
            <person name="Gilna P."/>
            <person name="Han C.S."/>
            <person name="Lucas S."/>
            <person name="Misra M."/>
            <person name="Myers G.L."/>
            <person name="Richardson P."/>
            <person name="Tapia R."/>
            <person name="Thayer N."/>
            <person name="Thompson L.S."/>
            <person name="Brettin T.S."/>
            <person name="Henrissat B."/>
            <person name="Wilson D.B."/>
            <person name="McBride M.J."/>
        </authorList>
    </citation>
    <scope>NUCLEOTIDE SEQUENCE [LARGE SCALE GENOMIC DNA]</scope>
    <source>
        <strain>ATCC 33406 / DSM 1761 / JCM 20678 / CIP 103989 / IAM 12607 / NBRC 15051 / NCIMB 9469 / D465</strain>
    </source>
</reference>
<comment type="function">
    <text evidence="1">Required for the formation of a threonylcarbamoyl group on adenosine at position 37 (t(6)A37) in tRNAs that read codons beginning with adenine. Is involved in the transfer of the threonylcarbamoyl moiety of threonylcarbamoyl-AMP (TC-AMP) to the N6 group of A37, together with TsaE and TsaB. TsaD likely plays a direct catalytic role in this reaction.</text>
</comment>
<comment type="catalytic activity">
    <reaction evidence="1">
        <text>L-threonylcarbamoyladenylate + adenosine(37) in tRNA = N(6)-L-threonylcarbamoyladenosine(37) in tRNA + AMP + H(+)</text>
        <dbReference type="Rhea" id="RHEA:37059"/>
        <dbReference type="Rhea" id="RHEA-COMP:10162"/>
        <dbReference type="Rhea" id="RHEA-COMP:10163"/>
        <dbReference type="ChEBI" id="CHEBI:15378"/>
        <dbReference type="ChEBI" id="CHEBI:73682"/>
        <dbReference type="ChEBI" id="CHEBI:74411"/>
        <dbReference type="ChEBI" id="CHEBI:74418"/>
        <dbReference type="ChEBI" id="CHEBI:456215"/>
        <dbReference type="EC" id="2.3.1.234"/>
    </reaction>
</comment>
<comment type="cofactor">
    <cofactor evidence="1">
        <name>Fe(2+)</name>
        <dbReference type="ChEBI" id="CHEBI:29033"/>
    </cofactor>
    <text evidence="1">Binds 1 Fe(2+) ion per subunit.</text>
</comment>
<comment type="subcellular location">
    <subcellularLocation>
        <location evidence="1">Cytoplasm</location>
    </subcellularLocation>
</comment>
<comment type="similarity">
    <text evidence="1">Belongs to the KAE1 / TsaD family.</text>
</comment>
<protein>
    <recommendedName>
        <fullName evidence="1">tRNA N6-adenosine threonylcarbamoyltransferase</fullName>
        <ecNumber evidence="1">2.3.1.234</ecNumber>
    </recommendedName>
    <alternativeName>
        <fullName evidence="1">N6-L-threonylcarbamoyladenine synthase</fullName>
        <shortName evidence="1">t(6)A synthase</shortName>
    </alternativeName>
    <alternativeName>
        <fullName evidence="1">t(6)A37 threonylcarbamoyladenosine biosynthesis protein TsaD</fullName>
    </alternativeName>
    <alternativeName>
        <fullName evidence="1">tRNA threonylcarbamoyladenosine biosynthesis protein TsaD</fullName>
    </alternativeName>
</protein>
<keyword id="KW-0012">Acyltransferase</keyword>
<keyword id="KW-0963">Cytoplasm</keyword>
<keyword id="KW-0408">Iron</keyword>
<keyword id="KW-0479">Metal-binding</keyword>
<keyword id="KW-1185">Reference proteome</keyword>
<keyword id="KW-0808">Transferase</keyword>
<keyword id="KW-0819">tRNA processing</keyword>
<name>TSAD_CYTH3</name>
<accession>Q11TP2</accession>
<proteinExistence type="inferred from homology"/>
<feature type="chain" id="PRO_0000303341" description="tRNA N6-adenosine threonylcarbamoyltransferase">
    <location>
        <begin position="1"/>
        <end position="343"/>
    </location>
</feature>
<feature type="binding site" evidence="1">
    <location>
        <position position="116"/>
    </location>
    <ligand>
        <name>Fe cation</name>
        <dbReference type="ChEBI" id="CHEBI:24875"/>
    </ligand>
</feature>
<feature type="binding site" evidence="1">
    <location>
        <position position="120"/>
    </location>
    <ligand>
        <name>Fe cation</name>
        <dbReference type="ChEBI" id="CHEBI:24875"/>
    </ligand>
</feature>
<feature type="binding site" evidence="1">
    <location>
        <begin position="139"/>
        <end position="143"/>
    </location>
    <ligand>
        <name>substrate</name>
    </ligand>
</feature>
<feature type="binding site" evidence="1">
    <location>
        <position position="172"/>
    </location>
    <ligand>
        <name>substrate</name>
    </ligand>
</feature>
<feature type="binding site" evidence="1">
    <location>
        <position position="185"/>
    </location>
    <ligand>
        <name>substrate</name>
    </ligand>
</feature>
<feature type="binding site" evidence="1">
    <location>
        <position position="189"/>
    </location>
    <ligand>
        <name>substrate</name>
    </ligand>
</feature>
<feature type="binding site" evidence="1">
    <location>
        <position position="280"/>
    </location>
    <ligand>
        <name>substrate</name>
    </ligand>
</feature>
<feature type="binding site" evidence="1">
    <location>
        <position position="308"/>
    </location>
    <ligand>
        <name>Fe cation</name>
        <dbReference type="ChEBI" id="CHEBI:24875"/>
    </ligand>
</feature>
<sequence length="343" mass="37080">MSDQSMSVTLLAIESSCDETAAAVIQDGNILCNIVASQRIHEKYGGIVPELASRAHQQHIIPVVAQALLEANIQKSDLNAVACTSGPGLLGALLVGVSFSKAFASALHIPVIKVNHMKAHILAHFIGDVKPSFPFICMTVSGGHTQLVIVRNYLEMEVVGETQDDAVGEAFDKTAKLMGLPYPGGPLIDSYAKQGNPLAFPFPTVDMPGYNYSFSGIKTAFMYFLKKNTAVDPDFIQKNLPDICASVQHALIDVLMRKLKRLVVDTGINRVAIAGGVSANSGLRKAMEQKREQEGWDVYIPAFEYCTDNAAMIAVAGYHQYLENDFAGWDLSPEPRLRIGGGL</sequence>